<sequence>MERYENLFAQLNDRREGAFVPFVTLGDPGIEQSLKIIDTLIDAGANALELGVPFSDPLADGPTIQNANLRAFAAGVTPAQCFEMLALIREKHPTIPIGLLMYANLVFNNGIDAFYARCEQVGVDSVLVADVPVEESAPFRQAALRHNIAPIFICPPNADDDLLRQVASYGRGYTYLLSRSGVTGAENRGALPLHHLIEKLKEYHAAPALQGFGISSPEQVSAAVRAGAAGAISGSAIVKIIEKNLASPEQMLAELRSFVSAMKAASRA</sequence>
<evidence type="ECO:0000255" key="1">
    <source>
        <dbReference type="HAMAP-Rule" id="MF_00131"/>
    </source>
</evidence>
<proteinExistence type="inferred from homology"/>
<dbReference type="EC" id="4.2.1.20" evidence="1"/>
<dbReference type="EMBL" id="CP000026">
    <property type="protein sequence ID" value="AAV77111.1"/>
    <property type="molecule type" value="Genomic_DNA"/>
</dbReference>
<dbReference type="RefSeq" id="WP_000443035.1">
    <property type="nucleotide sequence ID" value="NC_006511.1"/>
</dbReference>
<dbReference type="SMR" id="Q5PNM0"/>
<dbReference type="KEGG" id="spt:SPA1150"/>
<dbReference type="HOGENOM" id="CLU_016734_0_4_6"/>
<dbReference type="UniPathway" id="UPA00035">
    <property type="reaction ID" value="UER00044"/>
</dbReference>
<dbReference type="Proteomes" id="UP000008185">
    <property type="component" value="Chromosome"/>
</dbReference>
<dbReference type="GO" id="GO:0005829">
    <property type="term" value="C:cytosol"/>
    <property type="evidence" value="ECO:0007669"/>
    <property type="project" value="TreeGrafter"/>
</dbReference>
<dbReference type="GO" id="GO:0004834">
    <property type="term" value="F:tryptophan synthase activity"/>
    <property type="evidence" value="ECO:0007669"/>
    <property type="project" value="UniProtKB-UniRule"/>
</dbReference>
<dbReference type="CDD" id="cd04724">
    <property type="entry name" value="Tryptophan_synthase_alpha"/>
    <property type="match status" value="1"/>
</dbReference>
<dbReference type="FunFam" id="3.20.20.70:FF:000037">
    <property type="entry name" value="Tryptophan synthase alpha chain"/>
    <property type="match status" value="1"/>
</dbReference>
<dbReference type="Gene3D" id="3.20.20.70">
    <property type="entry name" value="Aldolase class I"/>
    <property type="match status" value="1"/>
</dbReference>
<dbReference type="HAMAP" id="MF_00131">
    <property type="entry name" value="Trp_synth_alpha"/>
    <property type="match status" value="1"/>
</dbReference>
<dbReference type="InterPro" id="IPR013785">
    <property type="entry name" value="Aldolase_TIM"/>
</dbReference>
<dbReference type="InterPro" id="IPR011060">
    <property type="entry name" value="RibuloseP-bd_barrel"/>
</dbReference>
<dbReference type="InterPro" id="IPR018204">
    <property type="entry name" value="Trp_synthase_alpha_AS"/>
</dbReference>
<dbReference type="InterPro" id="IPR002028">
    <property type="entry name" value="Trp_synthase_suA"/>
</dbReference>
<dbReference type="NCBIfam" id="TIGR00262">
    <property type="entry name" value="trpA"/>
    <property type="match status" value="1"/>
</dbReference>
<dbReference type="PANTHER" id="PTHR43406:SF1">
    <property type="entry name" value="TRYPTOPHAN SYNTHASE ALPHA CHAIN, CHLOROPLASTIC"/>
    <property type="match status" value="1"/>
</dbReference>
<dbReference type="PANTHER" id="PTHR43406">
    <property type="entry name" value="TRYPTOPHAN SYNTHASE, ALPHA CHAIN"/>
    <property type="match status" value="1"/>
</dbReference>
<dbReference type="Pfam" id="PF00290">
    <property type="entry name" value="Trp_syntA"/>
    <property type="match status" value="1"/>
</dbReference>
<dbReference type="SUPFAM" id="SSF51366">
    <property type="entry name" value="Ribulose-phoshate binding barrel"/>
    <property type="match status" value="1"/>
</dbReference>
<dbReference type="PROSITE" id="PS00167">
    <property type="entry name" value="TRP_SYNTHASE_ALPHA"/>
    <property type="match status" value="1"/>
</dbReference>
<protein>
    <recommendedName>
        <fullName evidence="1">Tryptophan synthase alpha chain</fullName>
        <ecNumber evidence="1">4.2.1.20</ecNumber>
    </recommendedName>
</protein>
<name>TRPA_SALPA</name>
<feature type="chain" id="PRO_0000098837" description="Tryptophan synthase alpha chain">
    <location>
        <begin position="1"/>
        <end position="268"/>
    </location>
</feature>
<feature type="active site" description="Proton acceptor" evidence="1">
    <location>
        <position position="49"/>
    </location>
</feature>
<feature type="active site" description="Proton acceptor" evidence="1">
    <location>
        <position position="60"/>
    </location>
</feature>
<gene>
    <name evidence="1" type="primary">trpA</name>
    <name type="ordered locus">SPA1150</name>
</gene>
<reference key="1">
    <citation type="journal article" date="2004" name="Nat. Genet.">
        <title>Comparison of genome degradation in Paratyphi A and Typhi, human-restricted serovars of Salmonella enterica that cause typhoid.</title>
        <authorList>
            <person name="McClelland M."/>
            <person name="Sanderson K.E."/>
            <person name="Clifton S.W."/>
            <person name="Latreille P."/>
            <person name="Porwollik S."/>
            <person name="Sabo A."/>
            <person name="Meyer R."/>
            <person name="Bieri T."/>
            <person name="Ozersky P."/>
            <person name="McLellan M."/>
            <person name="Harkins C.R."/>
            <person name="Wang C."/>
            <person name="Nguyen C."/>
            <person name="Berghoff A."/>
            <person name="Elliott G."/>
            <person name="Kohlberg S."/>
            <person name="Strong C."/>
            <person name="Du F."/>
            <person name="Carter J."/>
            <person name="Kremizki C."/>
            <person name="Layman D."/>
            <person name="Leonard S."/>
            <person name="Sun H."/>
            <person name="Fulton L."/>
            <person name="Nash W."/>
            <person name="Miner T."/>
            <person name="Minx P."/>
            <person name="Delehaunty K."/>
            <person name="Fronick C."/>
            <person name="Magrini V."/>
            <person name="Nhan M."/>
            <person name="Warren W."/>
            <person name="Florea L."/>
            <person name="Spieth J."/>
            <person name="Wilson R.K."/>
        </authorList>
    </citation>
    <scope>NUCLEOTIDE SEQUENCE [LARGE SCALE GENOMIC DNA]</scope>
    <source>
        <strain>ATCC 9150 / SARB42</strain>
    </source>
</reference>
<organism>
    <name type="scientific">Salmonella paratyphi A (strain ATCC 9150 / SARB42)</name>
    <dbReference type="NCBI Taxonomy" id="295319"/>
    <lineage>
        <taxon>Bacteria</taxon>
        <taxon>Pseudomonadati</taxon>
        <taxon>Pseudomonadota</taxon>
        <taxon>Gammaproteobacteria</taxon>
        <taxon>Enterobacterales</taxon>
        <taxon>Enterobacteriaceae</taxon>
        <taxon>Salmonella</taxon>
    </lineage>
</organism>
<accession>Q5PNM0</accession>
<keyword id="KW-0028">Amino-acid biosynthesis</keyword>
<keyword id="KW-0057">Aromatic amino acid biosynthesis</keyword>
<keyword id="KW-0456">Lyase</keyword>
<keyword id="KW-0822">Tryptophan biosynthesis</keyword>
<comment type="function">
    <text evidence="1">The alpha subunit is responsible for the aldol cleavage of indoleglycerol phosphate to indole and glyceraldehyde 3-phosphate.</text>
</comment>
<comment type="catalytic activity">
    <reaction evidence="1">
        <text>(1S,2R)-1-C-(indol-3-yl)glycerol 3-phosphate + L-serine = D-glyceraldehyde 3-phosphate + L-tryptophan + H2O</text>
        <dbReference type="Rhea" id="RHEA:10532"/>
        <dbReference type="ChEBI" id="CHEBI:15377"/>
        <dbReference type="ChEBI" id="CHEBI:33384"/>
        <dbReference type="ChEBI" id="CHEBI:57912"/>
        <dbReference type="ChEBI" id="CHEBI:58866"/>
        <dbReference type="ChEBI" id="CHEBI:59776"/>
        <dbReference type="EC" id="4.2.1.20"/>
    </reaction>
</comment>
<comment type="pathway">
    <text evidence="1">Amino-acid biosynthesis; L-tryptophan biosynthesis; L-tryptophan from chorismate: step 5/5.</text>
</comment>
<comment type="subunit">
    <text evidence="1">Tetramer of two alpha and two beta chains.</text>
</comment>
<comment type="similarity">
    <text evidence="1">Belongs to the TrpA family.</text>
</comment>